<accession>Q7U4X5</accession>
<dbReference type="EC" id="4.2.1.10" evidence="1"/>
<dbReference type="EMBL" id="BX569694">
    <property type="protein sequence ID" value="CAE08453.1"/>
    <property type="molecule type" value="Genomic_DNA"/>
</dbReference>
<dbReference type="RefSeq" id="WP_011128796.1">
    <property type="nucleotide sequence ID" value="NC_005070.1"/>
</dbReference>
<dbReference type="SMR" id="Q7U4X5"/>
<dbReference type="STRING" id="84588.SYNW1938"/>
<dbReference type="KEGG" id="syw:SYNW1938"/>
<dbReference type="eggNOG" id="COG0757">
    <property type="taxonomic scope" value="Bacteria"/>
</dbReference>
<dbReference type="HOGENOM" id="CLU_090968_1_0_3"/>
<dbReference type="UniPathway" id="UPA00053">
    <property type="reaction ID" value="UER00086"/>
</dbReference>
<dbReference type="Proteomes" id="UP000001422">
    <property type="component" value="Chromosome"/>
</dbReference>
<dbReference type="GO" id="GO:0003855">
    <property type="term" value="F:3-dehydroquinate dehydratase activity"/>
    <property type="evidence" value="ECO:0007669"/>
    <property type="project" value="UniProtKB-UniRule"/>
</dbReference>
<dbReference type="GO" id="GO:0008652">
    <property type="term" value="P:amino acid biosynthetic process"/>
    <property type="evidence" value="ECO:0007669"/>
    <property type="project" value="UniProtKB-KW"/>
</dbReference>
<dbReference type="GO" id="GO:0009073">
    <property type="term" value="P:aromatic amino acid family biosynthetic process"/>
    <property type="evidence" value="ECO:0007669"/>
    <property type="project" value="UniProtKB-KW"/>
</dbReference>
<dbReference type="GO" id="GO:0009423">
    <property type="term" value="P:chorismate biosynthetic process"/>
    <property type="evidence" value="ECO:0007669"/>
    <property type="project" value="UniProtKB-UniRule"/>
</dbReference>
<dbReference type="GO" id="GO:0019631">
    <property type="term" value="P:quinate catabolic process"/>
    <property type="evidence" value="ECO:0007669"/>
    <property type="project" value="TreeGrafter"/>
</dbReference>
<dbReference type="CDD" id="cd00466">
    <property type="entry name" value="DHQase_II"/>
    <property type="match status" value="1"/>
</dbReference>
<dbReference type="Gene3D" id="3.40.50.9100">
    <property type="entry name" value="Dehydroquinase, class II"/>
    <property type="match status" value="1"/>
</dbReference>
<dbReference type="HAMAP" id="MF_00169">
    <property type="entry name" value="AroQ"/>
    <property type="match status" value="1"/>
</dbReference>
<dbReference type="InterPro" id="IPR001874">
    <property type="entry name" value="DHquinase_II"/>
</dbReference>
<dbReference type="InterPro" id="IPR018509">
    <property type="entry name" value="DHquinase_II_CS"/>
</dbReference>
<dbReference type="InterPro" id="IPR036441">
    <property type="entry name" value="DHquinase_II_sf"/>
</dbReference>
<dbReference type="NCBIfam" id="TIGR01088">
    <property type="entry name" value="aroQ"/>
    <property type="match status" value="1"/>
</dbReference>
<dbReference type="NCBIfam" id="NF003804">
    <property type="entry name" value="PRK05395.1-1"/>
    <property type="match status" value="1"/>
</dbReference>
<dbReference type="NCBIfam" id="NF003805">
    <property type="entry name" value="PRK05395.1-2"/>
    <property type="match status" value="1"/>
</dbReference>
<dbReference type="NCBIfam" id="NF003806">
    <property type="entry name" value="PRK05395.1-3"/>
    <property type="match status" value="1"/>
</dbReference>
<dbReference type="NCBIfam" id="NF003807">
    <property type="entry name" value="PRK05395.1-4"/>
    <property type="match status" value="1"/>
</dbReference>
<dbReference type="PANTHER" id="PTHR21272">
    <property type="entry name" value="CATABOLIC 3-DEHYDROQUINASE"/>
    <property type="match status" value="1"/>
</dbReference>
<dbReference type="PANTHER" id="PTHR21272:SF3">
    <property type="entry name" value="CATABOLIC 3-DEHYDROQUINASE"/>
    <property type="match status" value="1"/>
</dbReference>
<dbReference type="Pfam" id="PF01220">
    <property type="entry name" value="DHquinase_II"/>
    <property type="match status" value="1"/>
</dbReference>
<dbReference type="PIRSF" id="PIRSF001399">
    <property type="entry name" value="DHquinase_II"/>
    <property type="match status" value="1"/>
</dbReference>
<dbReference type="SUPFAM" id="SSF52304">
    <property type="entry name" value="Type II 3-dehydroquinate dehydratase"/>
    <property type="match status" value="1"/>
</dbReference>
<dbReference type="PROSITE" id="PS01029">
    <property type="entry name" value="DEHYDROQUINASE_II"/>
    <property type="match status" value="1"/>
</dbReference>
<comment type="function">
    <text evidence="1">Catalyzes a trans-dehydration via an enolate intermediate.</text>
</comment>
<comment type="catalytic activity">
    <reaction evidence="1">
        <text>3-dehydroquinate = 3-dehydroshikimate + H2O</text>
        <dbReference type="Rhea" id="RHEA:21096"/>
        <dbReference type="ChEBI" id="CHEBI:15377"/>
        <dbReference type="ChEBI" id="CHEBI:16630"/>
        <dbReference type="ChEBI" id="CHEBI:32364"/>
        <dbReference type="EC" id="4.2.1.10"/>
    </reaction>
</comment>
<comment type="pathway">
    <text evidence="1">Metabolic intermediate biosynthesis; chorismate biosynthesis; chorismate from D-erythrose 4-phosphate and phosphoenolpyruvate: step 3/7.</text>
</comment>
<comment type="subunit">
    <text evidence="1">Homododecamer.</text>
</comment>
<comment type="similarity">
    <text evidence="1">Belongs to the type-II 3-dehydroquinase family.</text>
</comment>
<organism>
    <name type="scientific">Parasynechococcus marenigrum (strain WH8102)</name>
    <dbReference type="NCBI Taxonomy" id="84588"/>
    <lineage>
        <taxon>Bacteria</taxon>
        <taxon>Bacillati</taxon>
        <taxon>Cyanobacteriota</taxon>
        <taxon>Cyanophyceae</taxon>
        <taxon>Synechococcales</taxon>
        <taxon>Prochlorococcaceae</taxon>
        <taxon>Parasynechococcus</taxon>
        <taxon>Parasynechococcus marenigrum</taxon>
    </lineage>
</organism>
<name>AROQ_PARMW</name>
<keyword id="KW-0028">Amino-acid biosynthesis</keyword>
<keyword id="KW-0057">Aromatic amino acid biosynthesis</keyword>
<keyword id="KW-0456">Lyase</keyword>
<sequence>MHLLLLNGPNLNLLGQREPGIYGSGTLASIEDGLRQEATAAGAVLECFQSNFEGALVERIHQAIGASQGILINAGAFTHTSIALRDALLGVAIPYVELHLSNTHAREPFRHRSYLADRAVGVVSGFGAMSYSLALQGLIDHLRQNG</sequence>
<feature type="chain" id="PRO_0000159932" description="3-dehydroquinate dehydratase">
    <location>
        <begin position="1"/>
        <end position="146"/>
    </location>
</feature>
<feature type="active site" description="Proton acceptor" evidence="1">
    <location>
        <position position="22"/>
    </location>
</feature>
<feature type="active site" description="Proton donor" evidence="1">
    <location>
        <position position="99"/>
    </location>
</feature>
<feature type="binding site" evidence="1">
    <location>
        <position position="73"/>
    </location>
    <ligand>
        <name>substrate</name>
    </ligand>
</feature>
<feature type="binding site" evidence="1">
    <location>
        <position position="79"/>
    </location>
    <ligand>
        <name>substrate</name>
    </ligand>
</feature>
<feature type="binding site" evidence="1">
    <location>
        <position position="86"/>
    </location>
    <ligand>
        <name>substrate</name>
    </ligand>
</feature>
<feature type="binding site" evidence="1">
    <location>
        <begin position="100"/>
        <end position="101"/>
    </location>
    <ligand>
        <name>substrate</name>
    </ligand>
</feature>
<feature type="binding site" evidence="1">
    <location>
        <position position="110"/>
    </location>
    <ligand>
        <name>substrate</name>
    </ligand>
</feature>
<feature type="site" description="Transition state stabilizer" evidence="1">
    <location>
        <position position="17"/>
    </location>
</feature>
<evidence type="ECO:0000255" key="1">
    <source>
        <dbReference type="HAMAP-Rule" id="MF_00169"/>
    </source>
</evidence>
<gene>
    <name evidence="1" type="primary">aroQ</name>
    <name type="synonym">aroD</name>
    <name type="ordered locus">SYNW1938</name>
</gene>
<reference key="1">
    <citation type="journal article" date="2003" name="Nature">
        <title>The genome of a motile marine Synechococcus.</title>
        <authorList>
            <person name="Palenik B."/>
            <person name="Brahamsha B."/>
            <person name="Larimer F.W."/>
            <person name="Land M.L."/>
            <person name="Hauser L."/>
            <person name="Chain P."/>
            <person name="Lamerdin J.E."/>
            <person name="Regala W."/>
            <person name="Allen E.E."/>
            <person name="McCarren J."/>
            <person name="Paulsen I.T."/>
            <person name="Dufresne A."/>
            <person name="Partensky F."/>
            <person name="Webb E.A."/>
            <person name="Waterbury J."/>
        </authorList>
    </citation>
    <scope>NUCLEOTIDE SEQUENCE [LARGE SCALE GENOMIC DNA]</scope>
    <source>
        <strain>WH8102</strain>
    </source>
</reference>
<proteinExistence type="inferred from homology"/>
<protein>
    <recommendedName>
        <fullName evidence="1">3-dehydroquinate dehydratase</fullName>
        <shortName evidence="1">3-dehydroquinase</shortName>
        <ecNumber evidence="1">4.2.1.10</ecNumber>
    </recommendedName>
    <alternativeName>
        <fullName evidence="1">Type II DHQase</fullName>
    </alternativeName>
</protein>